<feature type="chain" id="PRO_0000074509" description="Na(+)-translocating NADH-quinone reductase subunit F">
    <location>
        <begin position="1"/>
        <end position="407"/>
    </location>
</feature>
<feature type="transmembrane region" description="Helical" evidence="1">
    <location>
        <begin position="3"/>
        <end position="23"/>
    </location>
</feature>
<feature type="domain" description="2Fe-2S ferredoxin-type" evidence="1">
    <location>
        <begin position="32"/>
        <end position="126"/>
    </location>
</feature>
<feature type="domain" description="FAD-binding FR-type" evidence="1">
    <location>
        <begin position="129"/>
        <end position="269"/>
    </location>
</feature>
<feature type="region of interest" description="Catalytic">
    <location>
        <begin position="272"/>
        <end position="389"/>
    </location>
</feature>
<feature type="binding site" evidence="1">
    <location>
        <position position="69"/>
    </location>
    <ligand>
        <name>[2Fe-2S] cluster</name>
        <dbReference type="ChEBI" id="CHEBI:190135"/>
    </ligand>
</feature>
<feature type="binding site" evidence="1">
    <location>
        <position position="75"/>
    </location>
    <ligand>
        <name>[2Fe-2S] cluster</name>
        <dbReference type="ChEBI" id="CHEBI:190135"/>
    </ligand>
</feature>
<feature type="binding site" evidence="1">
    <location>
        <position position="78"/>
    </location>
    <ligand>
        <name>[2Fe-2S] cluster</name>
        <dbReference type="ChEBI" id="CHEBI:190135"/>
    </ligand>
</feature>
<feature type="binding site" evidence="1">
    <location>
        <position position="110"/>
    </location>
    <ligand>
        <name>[2Fe-2S] cluster</name>
        <dbReference type="ChEBI" id="CHEBI:190135"/>
    </ligand>
</feature>
<feature type="sequence conflict" description="In Ref. 2; BAA83762." evidence="2" ref="2">
    <original>V</original>
    <variation>M</variation>
    <location>
        <position position="114"/>
    </location>
</feature>
<feature type="sequence conflict" description="In Ref. 2; BAA83762." evidence="2" ref="2">
    <original>Q</original>
    <variation>E</variation>
    <location>
        <position position="185"/>
    </location>
</feature>
<feature type="sequence conflict" description="In Ref. 2; BAA83762." evidence="2" ref="2">
    <original>I</original>
    <variation>V</variation>
    <location>
        <position position="278"/>
    </location>
</feature>
<feature type="sequence conflict" description="In Ref. 2; BAA83762." evidence="2" ref="2">
    <original>GLA</original>
    <variation>MLQ</variation>
    <location>
        <begin position="324"/>
        <end position="326"/>
    </location>
</feature>
<reference key="1">
    <citation type="journal article" date="2003" name="Lancet">
        <title>Genome sequence of Vibrio parahaemolyticus: a pathogenic mechanism distinct from that of V. cholerae.</title>
        <authorList>
            <person name="Makino K."/>
            <person name="Oshima K."/>
            <person name="Kurokawa K."/>
            <person name="Yokoyama K."/>
            <person name="Uda T."/>
            <person name="Tagomori K."/>
            <person name="Iijima Y."/>
            <person name="Najima M."/>
            <person name="Nakano M."/>
            <person name="Yamashita A."/>
            <person name="Kubota Y."/>
            <person name="Kimura S."/>
            <person name="Yasunaga T."/>
            <person name="Honda T."/>
            <person name="Shinagawa H."/>
            <person name="Hattori M."/>
            <person name="Iida T."/>
        </authorList>
    </citation>
    <scope>NUCLEOTIDE SEQUENCE [LARGE SCALE GENOMIC DNA]</scope>
    <source>
        <strain>RIMD 2210633</strain>
    </source>
</reference>
<reference key="2">
    <citation type="journal article" date="2000" name="Can. J. Microbiol.">
        <title>Detection of the Na(+)-translocating NADH-quinone reductase in marine bacteria using a PCR technique.</title>
        <authorList>
            <person name="Kato S."/>
            <person name="Yumoto I."/>
        </authorList>
    </citation>
    <scope>NUCLEOTIDE SEQUENCE [GENOMIC DNA] OF 72-374</scope>
    <source>
        <strain>JCM 2147</strain>
    </source>
</reference>
<evidence type="ECO:0000255" key="1">
    <source>
        <dbReference type="HAMAP-Rule" id="MF_00430"/>
    </source>
</evidence>
<evidence type="ECO:0000305" key="2"/>
<protein>
    <recommendedName>
        <fullName evidence="1">Na(+)-translocating NADH-quinone reductase subunit F</fullName>
        <shortName evidence="1">Na(+)-NQR subunit F</shortName>
        <shortName evidence="1">Na(+)-translocating NQR subunit F</shortName>
        <ecNumber evidence="1">7.2.1.1</ecNumber>
    </recommendedName>
    <alternativeName>
        <fullName evidence="1">NQR complex subunit F</fullName>
    </alternativeName>
    <alternativeName>
        <fullName evidence="1">NQR-1 subunit F</fullName>
    </alternativeName>
</protein>
<name>NQRF_VIBPA</name>
<organism>
    <name type="scientific">Vibrio parahaemolyticus serotype O3:K6 (strain RIMD 2210633)</name>
    <dbReference type="NCBI Taxonomy" id="223926"/>
    <lineage>
        <taxon>Bacteria</taxon>
        <taxon>Pseudomonadati</taxon>
        <taxon>Pseudomonadota</taxon>
        <taxon>Gammaproteobacteria</taxon>
        <taxon>Vibrionales</taxon>
        <taxon>Vibrionaceae</taxon>
        <taxon>Vibrio</taxon>
    </lineage>
</organism>
<proteinExistence type="inferred from homology"/>
<comment type="function">
    <text evidence="1">NQR complex catalyzes the reduction of ubiquinone-1 to ubiquinol by two successive reactions, coupled with the transport of Na(+) ions from the cytoplasm to the periplasm. The first step is catalyzed by NqrF, which accepts electrons from NADH and reduces ubiquinone-1 to ubisemiquinone by a one-electron transfer pathway.</text>
</comment>
<comment type="catalytic activity">
    <reaction evidence="1">
        <text>a ubiquinone + n Na(+)(in) + NADH + H(+) = a ubiquinol + n Na(+)(out) + NAD(+)</text>
        <dbReference type="Rhea" id="RHEA:47748"/>
        <dbReference type="Rhea" id="RHEA-COMP:9565"/>
        <dbReference type="Rhea" id="RHEA-COMP:9566"/>
        <dbReference type="ChEBI" id="CHEBI:15378"/>
        <dbReference type="ChEBI" id="CHEBI:16389"/>
        <dbReference type="ChEBI" id="CHEBI:17976"/>
        <dbReference type="ChEBI" id="CHEBI:29101"/>
        <dbReference type="ChEBI" id="CHEBI:57540"/>
        <dbReference type="ChEBI" id="CHEBI:57945"/>
        <dbReference type="EC" id="7.2.1.1"/>
    </reaction>
</comment>
<comment type="cofactor">
    <cofactor evidence="1">
        <name>[2Fe-2S] cluster</name>
        <dbReference type="ChEBI" id="CHEBI:190135"/>
    </cofactor>
    <text evidence="1">Binds 1 [2Fe-2S] cluster.</text>
</comment>
<comment type="cofactor">
    <cofactor evidence="1">
        <name>FAD</name>
        <dbReference type="ChEBI" id="CHEBI:57692"/>
    </cofactor>
</comment>
<comment type="subunit">
    <text evidence="1">Composed of six subunits; NqrA, NqrB, NqrC, NqrD, NqrE and NqrF.</text>
</comment>
<comment type="subcellular location">
    <subcellularLocation>
        <location evidence="1">Cell inner membrane</location>
        <topology evidence="1">Single-pass membrane protein</topology>
    </subcellularLocation>
</comment>
<comment type="similarity">
    <text evidence="1">Belongs to the NqrF family.</text>
</comment>
<keyword id="KW-0001">2Fe-2S</keyword>
<keyword id="KW-0997">Cell inner membrane</keyword>
<keyword id="KW-1003">Cell membrane</keyword>
<keyword id="KW-0274">FAD</keyword>
<keyword id="KW-0285">Flavoprotein</keyword>
<keyword id="KW-0406">Ion transport</keyword>
<keyword id="KW-0408">Iron</keyword>
<keyword id="KW-0411">Iron-sulfur</keyword>
<keyword id="KW-0472">Membrane</keyword>
<keyword id="KW-0479">Metal-binding</keyword>
<keyword id="KW-0520">NAD</keyword>
<keyword id="KW-0915">Sodium</keyword>
<keyword id="KW-0739">Sodium transport</keyword>
<keyword id="KW-1278">Translocase</keyword>
<keyword id="KW-0812">Transmembrane</keyword>
<keyword id="KW-1133">Transmembrane helix</keyword>
<keyword id="KW-0813">Transport</keyword>
<keyword id="KW-0830">Ubiquinone</keyword>
<dbReference type="EC" id="7.2.1.1" evidence="1"/>
<dbReference type="EMBL" id="BA000031">
    <property type="protein sequence ID" value="BAC60609.1"/>
    <property type="molecule type" value="Genomic_DNA"/>
</dbReference>
<dbReference type="EMBL" id="AB024725">
    <property type="protein sequence ID" value="BAA83762.1"/>
    <property type="molecule type" value="Genomic_DNA"/>
</dbReference>
<dbReference type="RefSeq" id="NP_798725.1">
    <property type="nucleotide sequence ID" value="NC_004603.1"/>
</dbReference>
<dbReference type="RefSeq" id="WP_005456545.1">
    <property type="nucleotide sequence ID" value="NC_004603.1"/>
</dbReference>
<dbReference type="SMR" id="Q9LCJ0"/>
<dbReference type="GeneID" id="1189859"/>
<dbReference type="KEGG" id="vpa:VP2346"/>
<dbReference type="PATRIC" id="fig|223926.6.peg.2249"/>
<dbReference type="eggNOG" id="COG2871">
    <property type="taxonomic scope" value="Bacteria"/>
</dbReference>
<dbReference type="HOGENOM" id="CLU_003827_7_2_6"/>
<dbReference type="Proteomes" id="UP000002493">
    <property type="component" value="Chromosome 1"/>
</dbReference>
<dbReference type="GO" id="GO:0005886">
    <property type="term" value="C:plasma membrane"/>
    <property type="evidence" value="ECO:0007669"/>
    <property type="project" value="UniProtKB-SubCell"/>
</dbReference>
<dbReference type="GO" id="GO:0051537">
    <property type="term" value="F:2 iron, 2 sulfur cluster binding"/>
    <property type="evidence" value="ECO:0007669"/>
    <property type="project" value="UniProtKB-KW"/>
</dbReference>
<dbReference type="GO" id="GO:0009055">
    <property type="term" value="F:electron transfer activity"/>
    <property type="evidence" value="ECO:0007669"/>
    <property type="project" value="UniProtKB-UniRule"/>
</dbReference>
<dbReference type="GO" id="GO:0046872">
    <property type="term" value="F:metal ion binding"/>
    <property type="evidence" value="ECO:0007669"/>
    <property type="project" value="UniProtKB-KW"/>
</dbReference>
<dbReference type="GO" id="GO:0016655">
    <property type="term" value="F:oxidoreductase activity, acting on NAD(P)H, quinone or similar compound as acceptor"/>
    <property type="evidence" value="ECO:0007669"/>
    <property type="project" value="InterPro"/>
</dbReference>
<dbReference type="GO" id="GO:0006814">
    <property type="term" value="P:sodium ion transport"/>
    <property type="evidence" value="ECO:0007669"/>
    <property type="project" value="UniProtKB-UniRule"/>
</dbReference>
<dbReference type="CDD" id="cd00207">
    <property type="entry name" value="fer2"/>
    <property type="match status" value="1"/>
</dbReference>
<dbReference type="CDD" id="cd06188">
    <property type="entry name" value="NADH_quinone_reductase"/>
    <property type="match status" value="1"/>
</dbReference>
<dbReference type="FunFam" id="2.40.30.10:FF:000064">
    <property type="entry name" value="Na(+)-translocating NADH-quinone reductase subunit F"/>
    <property type="match status" value="1"/>
</dbReference>
<dbReference type="FunFam" id="3.10.20.30:FF:000024">
    <property type="entry name" value="Na(+)-translocating NADH-quinone reductase subunit F"/>
    <property type="match status" value="1"/>
</dbReference>
<dbReference type="FunFam" id="3.40.50.80:FF:000014">
    <property type="entry name" value="Na(+)-translocating NADH-quinone reductase subunit F"/>
    <property type="match status" value="1"/>
</dbReference>
<dbReference type="Gene3D" id="3.10.20.30">
    <property type="match status" value="1"/>
</dbReference>
<dbReference type="Gene3D" id="3.40.50.80">
    <property type="entry name" value="Nucleotide-binding domain of ferredoxin-NADP reductase (FNR) module"/>
    <property type="match status" value="1"/>
</dbReference>
<dbReference type="Gene3D" id="2.40.30.10">
    <property type="entry name" value="Translation factors"/>
    <property type="match status" value="1"/>
</dbReference>
<dbReference type="HAMAP" id="MF_00430">
    <property type="entry name" value="NqrF"/>
    <property type="match status" value="1"/>
</dbReference>
<dbReference type="InterPro" id="IPR036010">
    <property type="entry name" value="2Fe-2S_ferredoxin-like_sf"/>
</dbReference>
<dbReference type="InterPro" id="IPR001041">
    <property type="entry name" value="2Fe-2S_ferredoxin-type"/>
</dbReference>
<dbReference type="InterPro" id="IPR012675">
    <property type="entry name" value="Beta-grasp_dom_sf"/>
</dbReference>
<dbReference type="InterPro" id="IPR008333">
    <property type="entry name" value="Cbr1-like_FAD-bd_dom"/>
</dbReference>
<dbReference type="InterPro" id="IPR017927">
    <property type="entry name" value="FAD-bd_FR_type"/>
</dbReference>
<dbReference type="InterPro" id="IPR001709">
    <property type="entry name" value="Flavoprot_Pyr_Nucl_cyt_Rdtase"/>
</dbReference>
<dbReference type="InterPro" id="IPR039261">
    <property type="entry name" value="FNR_nucleotide-bd"/>
</dbReference>
<dbReference type="InterPro" id="IPR010205">
    <property type="entry name" value="NqrF"/>
</dbReference>
<dbReference type="InterPro" id="IPR001433">
    <property type="entry name" value="OxRdtase_FAD/NAD-bd"/>
</dbReference>
<dbReference type="InterPro" id="IPR017938">
    <property type="entry name" value="Riboflavin_synthase-like_b-brl"/>
</dbReference>
<dbReference type="NCBIfam" id="TIGR01941">
    <property type="entry name" value="nqrF"/>
    <property type="match status" value="1"/>
</dbReference>
<dbReference type="PANTHER" id="PTHR43644">
    <property type="entry name" value="NA(+)-TRANSLOCATING NADH-QUINONE REDUCTASE SUBUNIT"/>
    <property type="match status" value="1"/>
</dbReference>
<dbReference type="PANTHER" id="PTHR43644:SF1">
    <property type="entry name" value="NAD(P)H-FLAVIN REDUCTASE"/>
    <property type="match status" value="1"/>
</dbReference>
<dbReference type="Pfam" id="PF00970">
    <property type="entry name" value="FAD_binding_6"/>
    <property type="match status" value="1"/>
</dbReference>
<dbReference type="Pfam" id="PF00111">
    <property type="entry name" value="Fer2"/>
    <property type="match status" value="1"/>
</dbReference>
<dbReference type="Pfam" id="PF00175">
    <property type="entry name" value="NAD_binding_1"/>
    <property type="match status" value="1"/>
</dbReference>
<dbReference type="PIRSF" id="PIRSF000044">
    <property type="entry name" value="Cis_Diol_DH_RD"/>
    <property type="match status" value="1"/>
</dbReference>
<dbReference type="PRINTS" id="PR00371">
    <property type="entry name" value="FPNCR"/>
</dbReference>
<dbReference type="SUPFAM" id="SSF54292">
    <property type="entry name" value="2Fe-2S ferredoxin-like"/>
    <property type="match status" value="1"/>
</dbReference>
<dbReference type="SUPFAM" id="SSF52343">
    <property type="entry name" value="Ferredoxin reductase-like, C-terminal NADP-linked domain"/>
    <property type="match status" value="1"/>
</dbReference>
<dbReference type="SUPFAM" id="SSF63380">
    <property type="entry name" value="Riboflavin synthase domain-like"/>
    <property type="match status" value="1"/>
</dbReference>
<dbReference type="PROSITE" id="PS51085">
    <property type="entry name" value="2FE2S_FER_2"/>
    <property type="match status" value="1"/>
</dbReference>
<dbReference type="PROSITE" id="PS51384">
    <property type="entry name" value="FAD_FR"/>
    <property type="match status" value="1"/>
</dbReference>
<accession>Q9LCJ0</accession>
<sequence length="407" mass="45083">MDIILGVVMFTLIVLALVLVILFAKSKLVPTGDITISVNGDADKAIVTQPGGKLLSALAGAGVFVSSACGGGGSCGQCRVKVKSGGGDILPTELDHITKGEAREGERLACQVAVKTDMDIELPEEIFGVKKWECTVISNDNKATFIKELKLQIPDGESVPFRAGGYIQIEAPAHHVKYADYDIPQEYREDWEKFNLFRYESKVNEETIRAYSMANYPEEHGIIMLNVRIATPPPNNPDVPPGIMSSYIWSLKEGDKCTISGPFGEFFAKDTDAEMVFIGGGAGMAPMRSHIFDQLKRLHSKRKMSFWYGARSKREMFYVEDFDGLAAENDNFVWHCALSDPLPEDNWDGYTGFIHNVLYENYLRDHEAPEDCEYYMCGPPMMNAAVIGMLKDLGVEDENILLDDFGG</sequence>
<gene>
    <name evidence="1" type="primary">nqrF</name>
    <name type="synonym">nqr6</name>
    <name type="ordered locus">VP2346</name>
</gene>